<gene>
    <name evidence="1" type="primary">metG</name>
    <name type="ordered locus">SCO3792</name>
    <name type="ORF">SCH63.39</name>
</gene>
<proteinExistence type="inferred from homology"/>
<protein>
    <recommendedName>
        <fullName evidence="1">Methionine--tRNA ligase</fullName>
        <ecNumber evidence="1">6.1.1.10</ecNumber>
    </recommendedName>
    <alternativeName>
        <fullName evidence="1">Methionyl-tRNA synthetase</fullName>
        <shortName evidence="1">MetRS</shortName>
    </alternativeName>
</protein>
<feature type="chain" id="PRO_0000139249" description="Methionine--tRNA ligase">
    <location>
        <begin position="1"/>
        <end position="538"/>
    </location>
</feature>
<feature type="short sequence motif" description="'HIGH' region">
    <location>
        <begin position="21"/>
        <end position="31"/>
    </location>
</feature>
<feature type="short sequence motif" description="'KMSKS' region">
    <location>
        <begin position="313"/>
        <end position="317"/>
    </location>
</feature>
<feature type="binding site" evidence="1">
    <location>
        <position position="137"/>
    </location>
    <ligand>
        <name>Zn(2+)</name>
        <dbReference type="ChEBI" id="CHEBI:29105"/>
    </ligand>
</feature>
<feature type="binding site" evidence="1">
    <location>
        <position position="140"/>
    </location>
    <ligand>
        <name>Zn(2+)</name>
        <dbReference type="ChEBI" id="CHEBI:29105"/>
    </ligand>
</feature>
<feature type="binding site" evidence="1">
    <location>
        <position position="162"/>
    </location>
    <ligand>
        <name>Zn(2+)</name>
        <dbReference type="ChEBI" id="CHEBI:29105"/>
    </ligand>
</feature>
<feature type="binding site" evidence="1">
    <location>
        <position position="165"/>
    </location>
    <ligand>
        <name>Zn(2+)</name>
        <dbReference type="ChEBI" id="CHEBI:29105"/>
    </ligand>
</feature>
<feature type="binding site" evidence="1">
    <location>
        <position position="316"/>
    </location>
    <ligand>
        <name>ATP</name>
        <dbReference type="ChEBI" id="CHEBI:30616"/>
    </ligand>
</feature>
<evidence type="ECO:0000255" key="1">
    <source>
        <dbReference type="HAMAP-Rule" id="MF_01228"/>
    </source>
</evidence>
<sequence>MAATGTEKQGAKAYYVSTPIYYVNDAPHLGHAYTTVAGDVLTRWHRQRGEKVWYLTGTDEHGQKIMRTAEANGVTPQAWADKLVTESWKPLWEHLDIANDDFIRTTQKRHTDRVQEFVQDLYDKGEIYKGGYEGPYCVGCEEYKLPGELLDGEGEYAGQKLCPIHKKPVEILSEENYFFKLSEYSEKLLAHYEANPGFVQPESARNEVVNFVRQGLQDLSISRSTFDWGVPVPWDDKHVIYVWVDALLNYATAVGYNENPEKFESTFPADVHLVGKDILRFHAIIWPAMLMAQGLPLPGKIAANGWLMVGGEKMSKSNLTGIKPQDLTTHFGVDAYRWYFLRAIAFGQDGSFSWEDFSARYTSELANDYGNLASRVAAMVGKYFGGELPAATADGDAEQAIHDGLTKAVAEADRKIGEELDFQGGILAVFDFVKQVNGYITEQEPWKVAKDDSPEGKARLATILYTAAEALRAVAVLLNPIMPDTSQKLWDSLGAEPSLGALADQHVQDAADWGRLPAGATVTKGAVLFPRLEEKPAA</sequence>
<dbReference type="EC" id="6.1.1.10" evidence="1"/>
<dbReference type="EMBL" id="AL939117">
    <property type="protein sequence ID" value="CAC10330.1"/>
    <property type="molecule type" value="Genomic_DNA"/>
</dbReference>
<dbReference type="RefSeq" id="NP_627982.1">
    <property type="nucleotide sequence ID" value="NC_003888.3"/>
</dbReference>
<dbReference type="RefSeq" id="WP_003975149.1">
    <property type="nucleotide sequence ID" value="NZ_VNID01000003.1"/>
</dbReference>
<dbReference type="SMR" id="Q9F2I9"/>
<dbReference type="FunCoup" id="Q9F2I9">
    <property type="interactions" value="444"/>
</dbReference>
<dbReference type="STRING" id="100226.gene:17761416"/>
<dbReference type="PaxDb" id="100226-SCO3792"/>
<dbReference type="GeneID" id="91385254"/>
<dbReference type="KEGG" id="sco:SCO3792"/>
<dbReference type="PATRIC" id="fig|100226.15.peg.3854"/>
<dbReference type="eggNOG" id="COG0143">
    <property type="taxonomic scope" value="Bacteria"/>
</dbReference>
<dbReference type="HOGENOM" id="CLU_009710_9_4_11"/>
<dbReference type="InParanoid" id="Q9F2I9"/>
<dbReference type="OrthoDB" id="9810191at2"/>
<dbReference type="PhylomeDB" id="Q9F2I9"/>
<dbReference type="Proteomes" id="UP000001973">
    <property type="component" value="Chromosome"/>
</dbReference>
<dbReference type="GO" id="GO:0005737">
    <property type="term" value="C:cytoplasm"/>
    <property type="evidence" value="ECO:0007669"/>
    <property type="project" value="UniProtKB-SubCell"/>
</dbReference>
<dbReference type="GO" id="GO:0005524">
    <property type="term" value="F:ATP binding"/>
    <property type="evidence" value="ECO:0007669"/>
    <property type="project" value="UniProtKB-UniRule"/>
</dbReference>
<dbReference type="GO" id="GO:0046872">
    <property type="term" value="F:metal ion binding"/>
    <property type="evidence" value="ECO:0007669"/>
    <property type="project" value="UniProtKB-KW"/>
</dbReference>
<dbReference type="GO" id="GO:0004825">
    <property type="term" value="F:methionine-tRNA ligase activity"/>
    <property type="evidence" value="ECO:0000318"/>
    <property type="project" value="GO_Central"/>
</dbReference>
<dbReference type="GO" id="GO:0006431">
    <property type="term" value="P:methionyl-tRNA aminoacylation"/>
    <property type="evidence" value="ECO:0000318"/>
    <property type="project" value="GO_Central"/>
</dbReference>
<dbReference type="CDD" id="cd07957">
    <property type="entry name" value="Anticodon_Ia_Met"/>
    <property type="match status" value="1"/>
</dbReference>
<dbReference type="CDD" id="cd00814">
    <property type="entry name" value="MetRS_core"/>
    <property type="match status" value="1"/>
</dbReference>
<dbReference type="FunFam" id="1.10.730.10:FF:000090">
    <property type="entry name" value="Methionine--tRNA ligase"/>
    <property type="match status" value="1"/>
</dbReference>
<dbReference type="FunFam" id="2.170.220.10:FF:000001">
    <property type="entry name" value="methionine--tRNA ligase, mitochondrial"/>
    <property type="match status" value="1"/>
</dbReference>
<dbReference type="Gene3D" id="2.170.220.10">
    <property type="match status" value="1"/>
</dbReference>
<dbReference type="Gene3D" id="3.40.50.620">
    <property type="entry name" value="HUPs"/>
    <property type="match status" value="1"/>
</dbReference>
<dbReference type="Gene3D" id="1.10.730.10">
    <property type="entry name" value="Isoleucyl-tRNA Synthetase, Domain 1"/>
    <property type="match status" value="1"/>
</dbReference>
<dbReference type="HAMAP" id="MF_01228">
    <property type="entry name" value="Met_tRNA_synth_type2"/>
    <property type="match status" value="1"/>
</dbReference>
<dbReference type="InterPro" id="IPR041872">
    <property type="entry name" value="Anticodon_Met"/>
</dbReference>
<dbReference type="InterPro" id="IPR014758">
    <property type="entry name" value="Met-tRNA_synth"/>
</dbReference>
<dbReference type="InterPro" id="IPR023457">
    <property type="entry name" value="Met-tRNA_synth_2"/>
</dbReference>
<dbReference type="InterPro" id="IPR015413">
    <property type="entry name" value="Methionyl/Leucyl_tRNA_Synth"/>
</dbReference>
<dbReference type="InterPro" id="IPR033911">
    <property type="entry name" value="MetRS_core"/>
</dbReference>
<dbReference type="InterPro" id="IPR014729">
    <property type="entry name" value="Rossmann-like_a/b/a_fold"/>
</dbReference>
<dbReference type="InterPro" id="IPR009080">
    <property type="entry name" value="tRNAsynth_Ia_anticodon-bd"/>
</dbReference>
<dbReference type="NCBIfam" id="TIGR00398">
    <property type="entry name" value="metG"/>
    <property type="match status" value="1"/>
</dbReference>
<dbReference type="NCBIfam" id="NF008900">
    <property type="entry name" value="PRK12267.1"/>
    <property type="match status" value="1"/>
</dbReference>
<dbReference type="PANTHER" id="PTHR43326:SF1">
    <property type="entry name" value="METHIONINE--TRNA LIGASE, MITOCHONDRIAL"/>
    <property type="match status" value="1"/>
</dbReference>
<dbReference type="PANTHER" id="PTHR43326">
    <property type="entry name" value="METHIONYL-TRNA SYNTHETASE"/>
    <property type="match status" value="1"/>
</dbReference>
<dbReference type="Pfam" id="PF19303">
    <property type="entry name" value="Anticodon_3"/>
    <property type="match status" value="1"/>
</dbReference>
<dbReference type="Pfam" id="PF09334">
    <property type="entry name" value="tRNA-synt_1g"/>
    <property type="match status" value="1"/>
</dbReference>
<dbReference type="PRINTS" id="PR01041">
    <property type="entry name" value="TRNASYNTHMET"/>
</dbReference>
<dbReference type="SUPFAM" id="SSF47323">
    <property type="entry name" value="Anticodon-binding domain of a subclass of class I aminoacyl-tRNA synthetases"/>
    <property type="match status" value="1"/>
</dbReference>
<dbReference type="SUPFAM" id="SSF52374">
    <property type="entry name" value="Nucleotidylyl transferase"/>
    <property type="match status" value="1"/>
</dbReference>
<organism>
    <name type="scientific">Streptomyces coelicolor (strain ATCC BAA-471 / A3(2) / M145)</name>
    <dbReference type="NCBI Taxonomy" id="100226"/>
    <lineage>
        <taxon>Bacteria</taxon>
        <taxon>Bacillati</taxon>
        <taxon>Actinomycetota</taxon>
        <taxon>Actinomycetes</taxon>
        <taxon>Kitasatosporales</taxon>
        <taxon>Streptomycetaceae</taxon>
        <taxon>Streptomyces</taxon>
        <taxon>Streptomyces albidoflavus group</taxon>
    </lineage>
</organism>
<keyword id="KW-0030">Aminoacyl-tRNA synthetase</keyword>
<keyword id="KW-0067">ATP-binding</keyword>
<keyword id="KW-0963">Cytoplasm</keyword>
<keyword id="KW-0436">Ligase</keyword>
<keyword id="KW-0479">Metal-binding</keyword>
<keyword id="KW-0547">Nucleotide-binding</keyword>
<keyword id="KW-0648">Protein biosynthesis</keyword>
<keyword id="KW-1185">Reference proteome</keyword>
<keyword id="KW-0862">Zinc</keyword>
<name>SYM_STRCO</name>
<accession>Q9F2I9</accession>
<reference key="1">
    <citation type="journal article" date="2002" name="Nature">
        <title>Complete genome sequence of the model actinomycete Streptomyces coelicolor A3(2).</title>
        <authorList>
            <person name="Bentley S.D."/>
            <person name="Chater K.F."/>
            <person name="Cerdeno-Tarraga A.-M."/>
            <person name="Challis G.L."/>
            <person name="Thomson N.R."/>
            <person name="James K.D."/>
            <person name="Harris D.E."/>
            <person name="Quail M.A."/>
            <person name="Kieser H."/>
            <person name="Harper D."/>
            <person name="Bateman A."/>
            <person name="Brown S."/>
            <person name="Chandra G."/>
            <person name="Chen C.W."/>
            <person name="Collins M."/>
            <person name="Cronin A."/>
            <person name="Fraser A."/>
            <person name="Goble A."/>
            <person name="Hidalgo J."/>
            <person name="Hornsby T."/>
            <person name="Howarth S."/>
            <person name="Huang C.-H."/>
            <person name="Kieser T."/>
            <person name="Larke L."/>
            <person name="Murphy L.D."/>
            <person name="Oliver K."/>
            <person name="O'Neil S."/>
            <person name="Rabbinowitsch E."/>
            <person name="Rajandream M.A."/>
            <person name="Rutherford K.M."/>
            <person name="Rutter S."/>
            <person name="Seeger K."/>
            <person name="Saunders D."/>
            <person name="Sharp S."/>
            <person name="Squares R."/>
            <person name="Squares S."/>
            <person name="Taylor K."/>
            <person name="Warren T."/>
            <person name="Wietzorrek A."/>
            <person name="Woodward J.R."/>
            <person name="Barrell B.G."/>
            <person name="Parkhill J."/>
            <person name="Hopwood D.A."/>
        </authorList>
    </citation>
    <scope>NUCLEOTIDE SEQUENCE [LARGE SCALE GENOMIC DNA]</scope>
    <source>
        <strain>ATCC BAA-471 / A3(2) / M145</strain>
    </source>
</reference>
<comment type="function">
    <text evidence="1">Is required not only for elongation of protein synthesis but also for the initiation of all mRNA translation through initiator tRNA(fMet) aminoacylation.</text>
</comment>
<comment type="catalytic activity">
    <reaction evidence="1">
        <text>tRNA(Met) + L-methionine + ATP = L-methionyl-tRNA(Met) + AMP + diphosphate</text>
        <dbReference type="Rhea" id="RHEA:13481"/>
        <dbReference type="Rhea" id="RHEA-COMP:9667"/>
        <dbReference type="Rhea" id="RHEA-COMP:9698"/>
        <dbReference type="ChEBI" id="CHEBI:30616"/>
        <dbReference type="ChEBI" id="CHEBI:33019"/>
        <dbReference type="ChEBI" id="CHEBI:57844"/>
        <dbReference type="ChEBI" id="CHEBI:78442"/>
        <dbReference type="ChEBI" id="CHEBI:78530"/>
        <dbReference type="ChEBI" id="CHEBI:456215"/>
        <dbReference type="EC" id="6.1.1.10"/>
    </reaction>
</comment>
<comment type="cofactor">
    <cofactor evidence="1">
        <name>Zn(2+)</name>
        <dbReference type="ChEBI" id="CHEBI:29105"/>
    </cofactor>
    <text evidence="1">Binds 1 zinc ion per subunit.</text>
</comment>
<comment type="subunit">
    <text evidence="1">Monomer.</text>
</comment>
<comment type="subcellular location">
    <subcellularLocation>
        <location evidence="1">Cytoplasm</location>
    </subcellularLocation>
</comment>
<comment type="similarity">
    <text evidence="1">Belongs to the class-I aminoacyl-tRNA synthetase family. MetG type 2A subfamily.</text>
</comment>